<organism>
    <name type="scientific">Paracidovorax citrulli (strain AAC00-1)</name>
    <name type="common">Acidovorax citrulli</name>
    <dbReference type="NCBI Taxonomy" id="397945"/>
    <lineage>
        <taxon>Bacteria</taxon>
        <taxon>Pseudomonadati</taxon>
        <taxon>Pseudomonadota</taxon>
        <taxon>Betaproteobacteria</taxon>
        <taxon>Burkholderiales</taxon>
        <taxon>Comamonadaceae</taxon>
        <taxon>Paracidovorax</taxon>
    </lineage>
</organism>
<feature type="chain" id="PRO_0000335305" description="Ribosomal RNA small subunit methyltransferase G">
    <location>
        <begin position="1"/>
        <end position="243"/>
    </location>
</feature>
<feature type="binding site" evidence="1">
    <location>
        <position position="97"/>
    </location>
    <ligand>
        <name>S-adenosyl-L-methionine</name>
        <dbReference type="ChEBI" id="CHEBI:59789"/>
    </ligand>
</feature>
<feature type="binding site" evidence="1">
    <location>
        <position position="102"/>
    </location>
    <ligand>
        <name>S-adenosyl-L-methionine</name>
        <dbReference type="ChEBI" id="CHEBI:59789"/>
    </ligand>
</feature>
<feature type="binding site" evidence="1">
    <location>
        <begin position="148"/>
        <end position="149"/>
    </location>
    <ligand>
        <name>S-adenosyl-L-methionine</name>
        <dbReference type="ChEBI" id="CHEBI:59789"/>
    </ligand>
</feature>
<feature type="binding site" evidence="1">
    <location>
        <position position="161"/>
    </location>
    <ligand>
        <name>S-adenosyl-L-methionine</name>
        <dbReference type="ChEBI" id="CHEBI:59789"/>
    </ligand>
</feature>
<gene>
    <name evidence="1" type="primary">rsmG</name>
    <name type="ordered locus">Aave_0052</name>
</gene>
<dbReference type="EC" id="2.1.1.170" evidence="1"/>
<dbReference type="EMBL" id="CP000512">
    <property type="protein sequence ID" value="ABM30667.1"/>
    <property type="molecule type" value="Genomic_DNA"/>
</dbReference>
<dbReference type="RefSeq" id="WP_011793245.1">
    <property type="nucleotide sequence ID" value="NC_008752.1"/>
</dbReference>
<dbReference type="SMR" id="A1TI79"/>
<dbReference type="STRING" id="397945.Aave_0052"/>
<dbReference type="GeneID" id="79789847"/>
<dbReference type="KEGG" id="aav:Aave_0052"/>
<dbReference type="eggNOG" id="COG0357">
    <property type="taxonomic scope" value="Bacteria"/>
</dbReference>
<dbReference type="HOGENOM" id="CLU_065341_2_0_4"/>
<dbReference type="OrthoDB" id="9808773at2"/>
<dbReference type="Proteomes" id="UP000002596">
    <property type="component" value="Chromosome"/>
</dbReference>
<dbReference type="GO" id="GO:0005829">
    <property type="term" value="C:cytosol"/>
    <property type="evidence" value="ECO:0007669"/>
    <property type="project" value="TreeGrafter"/>
</dbReference>
<dbReference type="GO" id="GO:0070043">
    <property type="term" value="F:rRNA (guanine-N7-)-methyltransferase activity"/>
    <property type="evidence" value="ECO:0007669"/>
    <property type="project" value="UniProtKB-UniRule"/>
</dbReference>
<dbReference type="Gene3D" id="3.40.50.150">
    <property type="entry name" value="Vaccinia Virus protein VP39"/>
    <property type="match status" value="1"/>
</dbReference>
<dbReference type="HAMAP" id="MF_00074">
    <property type="entry name" value="16SrRNA_methyltr_G"/>
    <property type="match status" value="1"/>
</dbReference>
<dbReference type="InterPro" id="IPR003682">
    <property type="entry name" value="rRNA_ssu_MeTfrase_G"/>
</dbReference>
<dbReference type="InterPro" id="IPR029063">
    <property type="entry name" value="SAM-dependent_MTases_sf"/>
</dbReference>
<dbReference type="NCBIfam" id="TIGR00138">
    <property type="entry name" value="rsmG_gidB"/>
    <property type="match status" value="1"/>
</dbReference>
<dbReference type="PANTHER" id="PTHR31760">
    <property type="entry name" value="S-ADENOSYL-L-METHIONINE-DEPENDENT METHYLTRANSFERASES SUPERFAMILY PROTEIN"/>
    <property type="match status" value="1"/>
</dbReference>
<dbReference type="PANTHER" id="PTHR31760:SF0">
    <property type="entry name" value="S-ADENOSYL-L-METHIONINE-DEPENDENT METHYLTRANSFERASES SUPERFAMILY PROTEIN"/>
    <property type="match status" value="1"/>
</dbReference>
<dbReference type="Pfam" id="PF02527">
    <property type="entry name" value="GidB"/>
    <property type="match status" value="1"/>
</dbReference>
<dbReference type="PIRSF" id="PIRSF003078">
    <property type="entry name" value="GidB"/>
    <property type="match status" value="1"/>
</dbReference>
<dbReference type="SUPFAM" id="SSF53335">
    <property type="entry name" value="S-adenosyl-L-methionine-dependent methyltransferases"/>
    <property type="match status" value="1"/>
</dbReference>
<protein>
    <recommendedName>
        <fullName evidence="1">Ribosomal RNA small subunit methyltransferase G</fullName>
        <ecNumber evidence="1">2.1.1.170</ecNumber>
    </recommendedName>
    <alternativeName>
        <fullName evidence="1">16S rRNA 7-methylguanosine methyltransferase</fullName>
        <shortName evidence="1">16S rRNA m7G methyltransferase</shortName>
    </alternativeName>
</protein>
<proteinExistence type="inferred from homology"/>
<sequence>MTVAADALSAPLRAGAEALGLDLSEAHLGQLLEFLALLQKWNQVYNLTAVRDPQEMLTHHLLDSLAAVAPLQRHLRGMQDLPGSAGDGAKLRLLDVGSGGGLPGVVFAICCPALDVSCVDTVAKKAAFIQQAAVSLRLRNLRGIHARVENLAGPFDVVSCRAFASLPDFVAWSQAAIAANGVWLAMKGRDPSDEITGLPPIAEVFHVEQLAVPGLDAERCIVWMRPRKGAEAGADGVGGPALP</sequence>
<evidence type="ECO:0000255" key="1">
    <source>
        <dbReference type="HAMAP-Rule" id="MF_00074"/>
    </source>
</evidence>
<keyword id="KW-0963">Cytoplasm</keyword>
<keyword id="KW-0489">Methyltransferase</keyword>
<keyword id="KW-0698">rRNA processing</keyword>
<keyword id="KW-0949">S-adenosyl-L-methionine</keyword>
<keyword id="KW-0808">Transferase</keyword>
<accession>A1TI79</accession>
<comment type="function">
    <text evidence="1">Specifically methylates the N7 position of guanine in position 527 of 16S rRNA.</text>
</comment>
<comment type="catalytic activity">
    <reaction evidence="1">
        <text>guanosine(527) in 16S rRNA + S-adenosyl-L-methionine = N(7)-methylguanosine(527) in 16S rRNA + S-adenosyl-L-homocysteine</text>
        <dbReference type="Rhea" id="RHEA:42732"/>
        <dbReference type="Rhea" id="RHEA-COMP:10209"/>
        <dbReference type="Rhea" id="RHEA-COMP:10210"/>
        <dbReference type="ChEBI" id="CHEBI:57856"/>
        <dbReference type="ChEBI" id="CHEBI:59789"/>
        <dbReference type="ChEBI" id="CHEBI:74269"/>
        <dbReference type="ChEBI" id="CHEBI:74480"/>
        <dbReference type="EC" id="2.1.1.170"/>
    </reaction>
</comment>
<comment type="subcellular location">
    <subcellularLocation>
        <location evidence="1">Cytoplasm</location>
    </subcellularLocation>
</comment>
<comment type="similarity">
    <text evidence="1">Belongs to the methyltransferase superfamily. RNA methyltransferase RsmG family.</text>
</comment>
<reference key="1">
    <citation type="submission" date="2006-12" db="EMBL/GenBank/DDBJ databases">
        <title>Complete sequence of Acidovorax avenae subsp. citrulli AAC00-1.</title>
        <authorList>
            <person name="Copeland A."/>
            <person name="Lucas S."/>
            <person name="Lapidus A."/>
            <person name="Barry K."/>
            <person name="Detter J.C."/>
            <person name="Glavina del Rio T."/>
            <person name="Dalin E."/>
            <person name="Tice H."/>
            <person name="Pitluck S."/>
            <person name="Kiss H."/>
            <person name="Brettin T."/>
            <person name="Bruce D."/>
            <person name="Han C."/>
            <person name="Tapia R."/>
            <person name="Gilna P."/>
            <person name="Schmutz J."/>
            <person name="Larimer F."/>
            <person name="Land M."/>
            <person name="Hauser L."/>
            <person name="Kyrpides N."/>
            <person name="Kim E."/>
            <person name="Stahl D."/>
            <person name="Richardson P."/>
        </authorList>
    </citation>
    <scope>NUCLEOTIDE SEQUENCE [LARGE SCALE GENOMIC DNA]</scope>
    <source>
        <strain>AAC00-1</strain>
    </source>
</reference>
<name>RSMG_PARC0</name>